<name>VF407_ASFWA</name>
<protein>
    <recommendedName>
        <fullName>Uncharacterized protein B407L</fullName>
        <shortName>pB407L</shortName>
    </recommendedName>
</protein>
<accession>P0CAG5</accession>
<proteinExistence type="inferred from homology"/>
<reference key="1">
    <citation type="submission" date="2003-03" db="EMBL/GenBank/DDBJ databases">
        <title>African swine fever virus genomes.</title>
        <authorList>
            <person name="Kutish G.F."/>
            <person name="Rock D.L."/>
        </authorList>
    </citation>
    <scope>NUCLEOTIDE SEQUENCE [LARGE SCALE GENOMIC DNA]</scope>
</reference>
<keyword id="KW-0426">Late protein</keyword>
<keyword id="KW-0677">Repeat</keyword>
<evidence type="ECO:0000256" key="1">
    <source>
        <dbReference type="SAM" id="MobiDB-lite"/>
    </source>
</evidence>
<evidence type="ECO:0000305" key="2"/>
<feature type="chain" id="PRO_0000373680" description="Uncharacterized protein B407L">
    <location>
        <begin position="1"/>
        <end position="412"/>
    </location>
</feature>
<feature type="repeat" description="1">
    <location>
        <begin position="112"/>
        <end position="116"/>
    </location>
</feature>
<feature type="repeat" description="2">
    <location>
        <begin position="117"/>
        <end position="121"/>
    </location>
</feature>
<feature type="repeat" description="3">
    <location>
        <begin position="122"/>
        <end position="126"/>
    </location>
</feature>
<feature type="repeat" description="4">
    <location>
        <begin position="127"/>
        <end position="131"/>
    </location>
</feature>
<feature type="repeat" description="5">
    <location>
        <begin position="132"/>
        <end position="136"/>
    </location>
</feature>
<feature type="repeat" description="6">
    <location>
        <begin position="137"/>
        <end position="141"/>
    </location>
</feature>
<feature type="repeat" description="7">
    <location>
        <begin position="142"/>
        <end position="146"/>
    </location>
</feature>
<feature type="region of interest" description="7 X 5 AA tandem repeats of G-[NS]-[IV]-R-[DS]">
    <location>
        <begin position="112"/>
        <end position="146"/>
    </location>
</feature>
<feature type="region of interest" description="Disordered" evidence="1">
    <location>
        <begin position="116"/>
        <end position="209"/>
    </location>
</feature>
<feature type="compositionally biased region" description="Low complexity" evidence="1">
    <location>
        <begin position="116"/>
        <end position="126"/>
    </location>
</feature>
<feature type="compositionally biased region" description="Basic and acidic residues" evidence="1">
    <location>
        <begin position="192"/>
        <end position="209"/>
    </location>
</feature>
<organismHost>
    <name type="scientific">Ornithodoros</name>
    <name type="common">relapsing fever ticks</name>
    <dbReference type="NCBI Taxonomy" id="6937"/>
</organismHost>
<organismHost>
    <name type="scientific">Phacochoerus aethiopicus</name>
    <name type="common">Warthog</name>
    <dbReference type="NCBI Taxonomy" id="85517"/>
</organismHost>
<organismHost>
    <name type="scientific">Phacochoerus africanus</name>
    <name type="common">Warthog</name>
    <dbReference type="NCBI Taxonomy" id="41426"/>
</organismHost>
<organismHost>
    <name type="scientific">Potamochoerus larvatus</name>
    <name type="common">Bushpig</name>
    <dbReference type="NCBI Taxonomy" id="273792"/>
</organismHost>
<organismHost>
    <name type="scientific">Sus scrofa</name>
    <name type="common">Pig</name>
    <dbReference type="NCBI Taxonomy" id="9823"/>
</organismHost>
<sequence>MEDTTFLEGANLAGITTLMNNLHINEQANLEELEKQVMGKQQSFPTDHFDEELNGLAKSLGINFNDPEFSLDAAHSVISKKPSGRGSDKVHGGIRRDSVCTDSICSDSVCSGSIRSGSIRSGSIRDGSIRDGSIRSGNIRDGSVRSSKTRRGPARNSSSRNDRGYSLSTHRKKYAESEASQKTAISKRDRKNHYAESEYSEKSIKPSTKQVDRLINHLRSNGDPNSFYKKEHDYERKTKLVKLEKINMLLTYLGNEQISTDDIKIPTIDSSMQEIDDVIEMLTLRNVGIRYSSIAEEILIGLARGLEIVFDGTREIPFLNYRPDYTGLHNTFMIKLFKMRYETSQVVGNLVQNMSPLSKICLELGPSLLLYPALIRTKHKASEDLYNLLQKGPEDPFTAYNEIHETLKKNNK</sequence>
<dbReference type="EMBL" id="AY261366">
    <property type="status" value="NOT_ANNOTATED_CDS"/>
    <property type="molecule type" value="Genomic_DNA"/>
</dbReference>
<dbReference type="Proteomes" id="UP000000858">
    <property type="component" value="Segment"/>
</dbReference>
<organism>
    <name type="scientific">African swine fever virus (isolate Warthog/Namibia/Wart80/1980)</name>
    <name type="common">ASFV</name>
    <dbReference type="NCBI Taxonomy" id="561444"/>
    <lineage>
        <taxon>Viruses</taxon>
        <taxon>Varidnaviria</taxon>
        <taxon>Bamfordvirae</taxon>
        <taxon>Nucleocytoviricota</taxon>
        <taxon>Pokkesviricetes</taxon>
        <taxon>Asfuvirales</taxon>
        <taxon>Asfarviridae</taxon>
        <taxon>Asfivirus</taxon>
        <taxon>African swine fever virus</taxon>
    </lineage>
</organism>
<comment type="induction">
    <text evidence="2">Expressed in the late phase of the viral replicative cycle.</text>
</comment>
<comment type="similarity">
    <text evidence="2">Belongs to the asfivirus B407L family.</text>
</comment>
<gene>
    <name type="ordered locus">War-094</name>
</gene>